<feature type="propeptide" id="PRO_0000013177">
    <location>
        <begin position="1"/>
        <end position="15"/>
    </location>
</feature>
<feature type="chain" id="PRO_0000013178" description="Hyaluronan and proteoglycan link protein 1">
    <location>
        <begin position="16"/>
        <end position="354"/>
    </location>
</feature>
<feature type="domain" description="Ig-like V-type">
    <location>
        <begin position="38"/>
        <end position="152"/>
    </location>
</feature>
<feature type="domain" description="Link 1" evidence="3">
    <location>
        <begin position="159"/>
        <end position="254"/>
    </location>
</feature>
<feature type="domain" description="Link 2" evidence="3">
    <location>
        <begin position="259"/>
        <end position="351"/>
    </location>
</feature>
<feature type="glycosylation site" description="N-linked (GlcNAc...) asparagine" evidence="2">
    <location>
        <position position="21"/>
    </location>
</feature>
<feature type="glycosylation site" description="N-linked (GlcNAc...) asparagine" evidence="2">
    <location>
        <position position="56"/>
    </location>
</feature>
<feature type="disulfide bond" evidence="1">
    <location>
        <begin position="61"/>
        <end position="139"/>
    </location>
</feature>
<feature type="disulfide bond" evidence="1">
    <location>
        <begin position="181"/>
        <end position="252"/>
    </location>
</feature>
<feature type="disulfide bond" evidence="1">
    <location>
        <begin position="205"/>
        <end position="226"/>
    </location>
</feature>
<feature type="disulfide bond" evidence="1">
    <location>
        <begin position="279"/>
        <end position="349"/>
    </location>
</feature>
<feature type="disulfide bond" evidence="1">
    <location>
        <begin position="304"/>
        <end position="325"/>
    </location>
</feature>
<feature type="sequence variant" id="VAR_049316" description="In dbSNP:rs6864342.">
    <original>N</original>
    <variation>S</variation>
    <location>
        <position position="281"/>
    </location>
</feature>
<feature type="sequence variant" id="VAR_036168" description="In a colorectal cancer sample; somatic mutation; dbSNP:rs770850928." evidence="6">
    <original>R</original>
    <variation>H</variation>
    <location>
        <position position="333"/>
    </location>
</feature>
<feature type="sequence conflict" description="In Ref. 7; AAH57808." evidence="7" ref="7">
    <original>E</original>
    <variation>V</variation>
    <location>
        <position position="274"/>
    </location>
</feature>
<keyword id="KW-1015">Disulfide bond</keyword>
<keyword id="KW-0272">Extracellular matrix</keyword>
<keyword id="KW-0325">Glycoprotein</keyword>
<keyword id="KW-0373">Hyaluronic acid</keyword>
<keyword id="KW-0393">Immunoglobulin domain</keyword>
<keyword id="KW-1267">Proteomics identification</keyword>
<keyword id="KW-1185">Reference proteome</keyword>
<keyword id="KW-0677">Repeat</keyword>
<keyword id="KW-0964">Secreted</keyword>
<sequence>MKSLLLLVLISICWADHLSDNYTLDHDRAIHIQAENGPHLLVEAEQAKVFSHRGGNVTLPCKFYRDPTAFGSGIHKIRIKWTKLTSDYLKEVDVFVSMGYHKKTYGGYQGRVFLKGGSDSDASLVITDLTLEDYGRYKCEVIEGLEDDTVVVALDLQGVVFPYFPRLGRYNLNFHEAQQACLDQDAVIASFDQLYDAWRGGLDWCNAGWLSDGSVQYPITKPREPCGGQNTVPGVRNYGFWDKDKSRYDVFCFTSNFNGRFYYLIHPTKLTYDEAVQACLNDGAQIAKVGQIFAAWKILGYDRCDAGWLADGSVRYPISRPRRRCSPTEAAVRFVGFPDKKHKLYGVYCFRAYN</sequence>
<reference key="1">
    <citation type="journal article" date="1990" name="Nucleic Acids Res.">
        <title>The primary structure of human cartilage link protein.</title>
        <authorList>
            <person name="Dudhia J."/>
            <person name="Hardingham T.E."/>
        </authorList>
    </citation>
    <scope>NUCLEOTIDE SEQUENCE [MRNA]</scope>
    <source>
        <tissue>Articular chondrocyte</tissue>
    </source>
</reference>
<reference key="2">
    <citation type="journal article" date="1990" name="Nucleic Acids Res.">
        <authorList>
            <person name="Dudhia J."/>
            <person name="Hardingham T.E."/>
        </authorList>
    </citation>
    <scope>ERRATUM OF PUBMED:2320422</scope>
</reference>
<reference key="3">
    <citation type="journal article" date="1990" name="Genomics">
        <title>Complete amino acid sequence of human cartilage link protein (CRTL1) deduced from cDNA clones and chromosomal assignment of the gene.</title>
        <authorList>
            <person name="Osborne-Lawrence S.L."/>
            <person name="Sinclair A.K."/>
            <person name="Hicks R.C."/>
            <person name="Lacey S.W."/>
            <person name="Eddy R.L. Jr."/>
            <person name="Byers M.G."/>
            <person name="Shows T.B."/>
            <person name="Duby A.D."/>
        </authorList>
    </citation>
    <scope>NUCLEOTIDE SEQUENCE [MRNA]</scope>
</reference>
<reference key="4">
    <citation type="journal article" date="1991" name="Nucleic Acids Res.">
        <title>Characterization of the promoter for the rat and human link protein gene.</title>
        <authorList>
            <person name="Rhodes C."/>
            <person name="Savagner P."/>
            <person name="Line S."/>
            <person name="Sasaki M."/>
            <person name="Chirigos M."/>
            <person name="Doege K."/>
            <person name="Yamada Y."/>
        </authorList>
    </citation>
    <scope>NUCLEOTIDE SEQUENCE [MRNA]</scope>
</reference>
<reference key="5">
    <citation type="journal article" date="2004" name="Nat. Genet.">
        <title>Complete sequencing and characterization of 21,243 full-length human cDNAs.</title>
        <authorList>
            <person name="Ota T."/>
            <person name="Suzuki Y."/>
            <person name="Nishikawa T."/>
            <person name="Otsuki T."/>
            <person name="Sugiyama T."/>
            <person name="Irie R."/>
            <person name="Wakamatsu A."/>
            <person name="Hayashi K."/>
            <person name="Sato H."/>
            <person name="Nagai K."/>
            <person name="Kimura K."/>
            <person name="Makita H."/>
            <person name="Sekine M."/>
            <person name="Obayashi M."/>
            <person name="Nishi T."/>
            <person name="Shibahara T."/>
            <person name="Tanaka T."/>
            <person name="Ishii S."/>
            <person name="Yamamoto J."/>
            <person name="Saito K."/>
            <person name="Kawai Y."/>
            <person name="Isono Y."/>
            <person name="Nakamura Y."/>
            <person name="Nagahari K."/>
            <person name="Murakami K."/>
            <person name="Yasuda T."/>
            <person name="Iwayanagi T."/>
            <person name="Wagatsuma M."/>
            <person name="Shiratori A."/>
            <person name="Sudo H."/>
            <person name="Hosoiri T."/>
            <person name="Kaku Y."/>
            <person name="Kodaira H."/>
            <person name="Kondo H."/>
            <person name="Sugawara M."/>
            <person name="Takahashi M."/>
            <person name="Kanda K."/>
            <person name="Yokoi T."/>
            <person name="Furuya T."/>
            <person name="Kikkawa E."/>
            <person name="Omura Y."/>
            <person name="Abe K."/>
            <person name="Kamihara K."/>
            <person name="Katsuta N."/>
            <person name="Sato K."/>
            <person name="Tanikawa M."/>
            <person name="Yamazaki M."/>
            <person name="Ninomiya K."/>
            <person name="Ishibashi T."/>
            <person name="Yamashita H."/>
            <person name="Murakawa K."/>
            <person name="Fujimori K."/>
            <person name="Tanai H."/>
            <person name="Kimata M."/>
            <person name="Watanabe M."/>
            <person name="Hiraoka S."/>
            <person name="Chiba Y."/>
            <person name="Ishida S."/>
            <person name="Ono Y."/>
            <person name="Takiguchi S."/>
            <person name="Watanabe S."/>
            <person name="Yosida M."/>
            <person name="Hotuta T."/>
            <person name="Kusano J."/>
            <person name="Kanehori K."/>
            <person name="Takahashi-Fujii A."/>
            <person name="Hara H."/>
            <person name="Tanase T.-O."/>
            <person name="Nomura Y."/>
            <person name="Togiya S."/>
            <person name="Komai F."/>
            <person name="Hara R."/>
            <person name="Takeuchi K."/>
            <person name="Arita M."/>
            <person name="Imose N."/>
            <person name="Musashino K."/>
            <person name="Yuuki H."/>
            <person name="Oshima A."/>
            <person name="Sasaki N."/>
            <person name="Aotsuka S."/>
            <person name="Yoshikawa Y."/>
            <person name="Matsunawa H."/>
            <person name="Ichihara T."/>
            <person name="Shiohata N."/>
            <person name="Sano S."/>
            <person name="Moriya S."/>
            <person name="Momiyama H."/>
            <person name="Satoh N."/>
            <person name="Takami S."/>
            <person name="Terashima Y."/>
            <person name="Suzuki O."/>
            <person name="Nakagawa S."/>
            <person name="Senoh A."/>
            <person name="Mizoguchi H."/>
            <person name="Goto Y."/>
            <person name="Shimizu F."/>
            <person name="Wakebe H."/>
            <person name="Hishigaki H."/>
            <person name="Watanabe T."/>
            <person name="Sugiyama A."/>
            <person name="Takemoto M."/>
            <person name="Kawakami B."/>
            <person name="Yamazaki M."/>
            <person name="Watanabe K."/>
            <person name="Kumagai A."/>
            <person name="Itakura S."/>
            <person name="Fukuzumi Y."/>
            <person name="Fujimori Y."/>
            <person name="Komiyama M."/>
            <person name="Tashiro H."/>
            <person name="Tanigami A."/>
            <person name="Fujiwara T."/>
            <person name="Ono T."/>
            <person name="Yamada K."/>
            <person name="Fujii Y."/>
            <person name="Ozaki K."/>
            <person name="Hirao M."/>
            <person name="Ohmori Y."/>
            <person name="Kawabata A."/>
            <person name="Hikiji T."/>
            <person name="Kobatake N."/>
            <person name="Inagaki H."/>
            <person name="Ikema Y."/>
            <person name="Okamoto S."/>
            <person name="Okitani R."/>
            <person name="Kawakami T."/>
            <person name="Noguchi S."/>
            <person name="Itoh T."/>
            <person name="Shigeta K."/>
            <person name="Senba T."/>
            <person name="Matsumura K."/>
            <person name="Nakajima Y."/>
            <person name="Mizuno T."/>
            <person name="Morinaga M."/>
            <person name="Sasaki M."/>
            <person name="Togashi T."/>
            <person name="Oyama M."/>
            <person name="Hata H."/>
            <person name="Watanabe M."/>
            <person name="Komatsu T."/>
            <person name="Mizushima-Sugano J."/>
            <person name="Satoh T."/>
            <person name="Shirai Y."/>
            <person name="Takahashi Y."/>
            <person name="Nakagawa K."/>
            <person name="Okumura K."/>
            <person name="Nagase T."/>
            <person name="Nomura N."/>
            <person name="Kikuchi H."/>
            <person name="Masuho Y."/>
            <person name="Yamashita R."/>
            <person name="Nakai K."/>
            <person name="Yada T."/>
            <person name="Nakamura Y."/>
            <person name="Ohara O."/>
            <person name="Isogai T."/>
            <person name="Sugano S."/>
        </authorList>
    </citation>
    <scope>NUCLEOTIDE SEQUENCE [LARGE SCALE MRNA]</scope>
</reference>
<reference key="6">
    <citation type="submission" date="2005-07" db="EMBL/GenBank/DDBJ databases">
        <authorList>
            <person name="Mural R.J."/>
            <person name="Istrail S."/>
            <person name="Sutton G.G."/>
            <person name="Florea L."/>
            <person name="Halpern A.L."/>
            <person name="Mobarry C.M."/>
            <person name="Lippert R."/>
            <person name="Walenz B."/>
            <person name="Shatkay H."/>
            <person name="Dew I."/>
            <person name="Miller J.R."/>
            <person name="Flanigan M.J."/>
            <person name="Edwards N.J."/>
            <person name="Bolanos R."/>
            <person name="Fasulo D."/>
            <person name="Halldorsson B.V."/>
            <person name="Hannenhalli S."/>
            <person name="Turner R."/>
            <person name="Yooseph S."/>
            <person name="Lu F."/>
            <person name="Nusskern D.R."/>
            <person name="Shue B.C."/>
            <person name="Zheng X.H."/>
            <person name="Zhong F."/>
            <person name="Delcher A.L."/>
            <person name="Huson D.H."/>
            <person name="Kravitz S.A."/>
            <person name="Mouchard L."/>
            <person name="Reinert K."/>
            <person name="Remington K.A."/>
            <person name="Clark A.G."/>
            <person name="Waterman M.S."/>
            <person name="Eichler E.E."/>
            <person name="Adams M.D."/>
            <person name="Hunkapiller M.W."/>
            <person name="Myers E.W."/>
            <person name="Venter J.C."/>
        </authorList>
    </citation>
    <scope>NUCLEOTIDE SEQUENCE [LARGE SCALE GENOMIC DNA]</scope>
</reference>
<reference key="7">
    <citation type="journal article" date="2004" name="Genome Res.">
        <title>The status, quality, and expansion of the NIH full-length cDNA project: the Mammalian Gene Collection (MGC).</title>
        <authorList>
            <consortium name="The MGC Project Team"/>
        </authorList>
    </citation>
    <scope>NUCLEOTIDE SEQUENCE [LARGE SCALE MRNA]</scope>
    <source>
        <tissue>Placenta</tissue>
    </source>
</reference>
<reference key="8">
    <citation type="journal article" date="2000" name="Biochem. Biophys. Res. Commun.">
        <title>The brain link protein-1 (BRAL1): cDNA cloning, genomic structure, and characterization as a novel link protein expressed in adult brain.</title>
        <authorList>
            <person name="Hirakawa S."/>
            <person name="Oohashi T."/>
            <person name="Su W.-D."/>
            <person name="Yoshioka H."/>
            <person name="Murakami T."/>
            <person name="Arata J."/>
            <person name="Ninomiya Y."/>
        </authorList>
    </citation>
    <scope>TISSUE SPECIFICITY</scope>
</reference>
<reference key="9">
    <citation type="journal article" date="2003" name="J. Biol. Chem.">
        <title>A hyaluronan binding link protein gene family whose members are physically linked adjacent to chondroitin sulfate proteoglycan core protein genes: the missing links.</title>
        <authorList>
            <person name="Spicer A.P."/>
            <person name="Joo A."/>
            <person name="Bowling R.A. Jr."/>
        </authorList>
    </citation>
    <scope>TISSUE SPECIFICITY</scope>
</reference>
<reference key="10">
    <citation type="journal article" date="2006" name="Science">
        <title>The consensus coding sequences of human breast and colorectal cancers.</title>
        <authorList>
            <person name="Sjoeblom T."/>
            <person name="Jones S."/>
            <person name="Wood L.D."/>
            <person name="Parsons D.W."/>
            <person name="Lin J."/>
            <person name="Barber T.D."/>
            <person name="Mandelker D."/>
            <person name="Leary R.J."/>
            <person name="Ptak J."/>
            <person name="Silliman N."/>
            <person name="Szabo S."/>
            <person name="Buckhaults P."/>
            <person name="Farrell C."/>
            <person name="Meeh P."/>
            <person name="Markowitz S.D."/>
            <person name="Willis J."/>
            <person name="Dawson D."/>
            <person name="Willson J.K.V."/>
            <person name="Gazdar A.F."/>
            <person name="Hartigan J."/>
            <person name="Wu L."/>
            <person name="Liu C."/>
            <person name="Parmigiani G."/>
            <person name="Park B.H."/>
            <person name="Bachman K.E."/>
            <person name="Papadopoulos N."/>
            <person name="Vogelstein B."/>
            <person name="Kinzler K.W."/>
            <person name="Velculescu V.E."/>
        </authorList>
    </citation>
    <scope>VARIANT [LARGE SCALE ANALYSIS] HIS-333</scope>
</reference>
<organism>
    <name type="scientific">Homo sapiens</name>
    <name type="common">Human</name>
    <dbReference type="NCBI Taxonomy" id="9606"/>
    <lineage>
        <taxon>Eukaryota</taxon>
        <taxon>Metazoa</taxon>
        <taxon>Chordata</taxon>
        <taxon>Craniata</taxon>
        <taxon>Vertebrata</taxon>
        <taxon>Euteleostomi</taxon>
        <taxon>Mammalia</taxon>
        <taxon>Eutheria</taxon>
        <taxon>Euarchontoglires</taxon>
        <taxon>Primates</taxon>
        <taxon>Haplorrhini</taxon>
        <taxon>Catarrhini</taxon>
        <taxon>Hominidae</taxon>
        <taxon>Homo</taxon>
    </lineage>
</organism>
<name>HPLN1_HUMAN</name>
<proteinExistence type="evidence at protein level"/>
<dbReference type="EMBL" id="X17405">
    <property type="protein sequence ID" value="CAA35462.1"/>
    <property type="molecule type" value="mRNA"/>
</dbReference>
<dbReference type="EMBL" id="U43328">
    <property type="protein sequence ID" value="AAA85216.1"/>
    <property type="molecule type" value="mRNA"/>
</dbReference>
<dbReference type="EMBL" id="AK313713">
    <property type="protein sequence ID" value="BAG36456.1"/>
    <property type="molecule type" value="mRNA"/>
</dbReference>
<dbReference type="EMBL" id="CH471084">
    <property type="protein sequence ID" value="EAW95912.1"/>
    <property type="molecule type" value="Genomic_DNA"/>
</dbReference>
<dbReference type="EMBL" id="BC057808">
    <property type="protein sequence ID" value="AAH57808.1"/>
    <property type="molecule type" value="mRNA"/>
</dbReference>
<dbReference type="CCDS" id="CCDS4061.1"/>
<dbReference type="PIR" id="S14914">
    <property type="entry name" value="LKHU"/>
</dbReference>
<dbReference type="RefSeq" id="NP_001875.1">
    <property type="nucleotide sequence ID" value="NM_001884.4"/>
</dbReference>
<dbReference type="RefSeq" id="XP_011541470.1">
    <property type="nucleotide sequence ID" value="XM_011543168.3"/>
</dbReference>
<dbReference type="RefSeq" id="XP_016864540.1">
    <property type="nucleotide sequence ID" value="XM_017009051.2"/>
</dbReference>
<dbReference type="RefSeq" id="XP_016864541.1">
    <property type="nucleotide sequence ID" value="XM_017009052.2"/>
</dbReference>
<dbReference type="RefSeq" id="XP_054207629.1">
    <property type="nucleotide sequence ID" value="XM_054351654.1"/>
</dbReference>
<dbReference type="RefSeq" id="XP_054207630.1">
    <property type="nucleotide sequence ID" value="XM_054351655.1"/>
</dbReference>
<dbReference type="RefSeq" id="XP_054207631.1">
    <property type="nucleotide sequence ID" value="XM_054351656.1"/>
</dbReference>
<dbReference type="SMR" id="P10915"/>
<dbReference type="BioGRID" id="107794">
    <property type="interactions" value="5"/>
</dbReference>
<dbReference type="FunCoup" id="P10915">
    <property type="interactions" value="216"/>
</dbReference>
<dbReference type="IntAct" id="P10915">
    <property type="interactions" value="3"/>
</dbReference>
<dbReference type="STRING" id="9606.ENSP00000274341"/>
<dbReference type="DrugBank" id="DB08818">
    <property type="generic name" value="Hyaluronic acid"/>
</dbReference>
<dbReference type="GlyConnect" id="1380">
    <property type="glycosylation" value="1 N-Linked glycan (1 site)"/>
</dbReference>
<dbReference type="GlyCosmos" id="P10915">
    <property type="glycosylation" value="2 sites, 1 glycan"/>
</dbReference>
<dbReference type="GlyGen" id="P10915">
    <property type="glycosylation" value="2 sites, 26 N-linked glycans (1 site)"/>
</dbReference>
<dbReference type="iPTMnet" id="P10915"/>
<dbReference type="PhosphoSitePlus" id="P10915"/>
<dbReference type="BioMuta" id="HAPLN1"/>
<dbReference type="DMDM" id="130310"/>
<dbReference type="jPOST" id="P10915"/>
<dbReference type="MassIVE" id="P10915"/>
<dbReference type="PaxDb" id="9606-ENSP00000274341"/>
<dbReference type="PeptideAtlas" id="P10915"/>
<dbReference type="ProteomicsDB" id="52677"/>
<dbReference type="Antibodypedia" id="12888">
    <property type="antibodies" value="244 antibodies from 29 providers"/>
</dbReference>
<dbReference type="DNASU" id="1404"/>
<dbReference type="Ensembl" id="ENST00000274341.9">
    <property type="protein sequence ID" value="ENSP00000274341.4"/>
    <property type="gene ID" value="ENSG00000145681.11"/>
</dbReference>
<dbReference type="GeneID" id="1404"/>
<dbReference type="KEGG" id="hsa:1404"/>
<dbReference type="MANE-Select" id="ENST00000274341.9">
    <property type="protein sequence ID" value="ENSP00000274341.4"/>
    <property type="RefSeq nucleotide sequence ID" value="NM_001884.4"/>
    <property type="RefSeq protein sequence ID" value="NP_001875.1"/>
</dbReference>
<dbReference type="UCSC" id="uc003kin.4">
    <property type="organism name" value="human"/>
</dbReference>
<dbReference type="AGR" id="HGNC:2380"/>
<dbReference type="CTD" id="1404"/>
<dbReference type="DisGeNET" id="1404"/>
<dbReference type="GeneCards" id="HAPLN1"/>
<dbReference type="HGNC" id="HGNC:2380">
    <property type="gene designation" value="HAPLN1"/>
</dbReference>
<dbReference type="HPA" id="ENSG00000145681">
    <property type="expression patterns" value="Tissue enriched (placenta)"/>
</dbReference>
<dbReference type="MIM" id="115435">
    <property type="type" value="gene"/>
</dbReference>
<dbReference type="neXtProt" id="NX_P10915"/>
<dbReference type="OpenTargets" id="ENSG00000145681"/>
<dbReference type="PharmGKB" id="PA26901"/>
<dbReference type="VEuPathDB" id="HostDB:ENSG00000145681"/>
<dbReference type="eggNOG" id="ENOG502QRAR">
    <property type="taxonomic scope" value="Eukaryota"/>
</dbReference>
<dbReference type="GeneTree" id="ENSGT00940000159267"/>
<dbReference type="HOGENOM" id="CLU_052285_1_0_1"/>
<dbReference type="InParanoid" id="P10915"/>
<dbReference type="OMA" id="ERACHDQ"/>
<dbReference type="OrthoDB" id="5359219at2759"/>
<dbReference type="PAN-GO" id="P10915">
    <property type="GO annotations" value="3 GO annotations based on evolutionary models"/>
</dbReference>
<dbReference type="PhylomeDB" id="P10915"/>
<dbReference type="TreeFam" id="TF332134"/>
<dbReference type="PathwayCommons" id="P10915"/>
<dbReference type="Reactome" id="R-HSA-3000178">
    <property type="pathway name" value="ECM proteoglycans"/>
</dbReference>
<dbReference type="SignaLink" id="P10915"/>
<dbReference type="SIGNOR" id="P10915"/>
<dbReference type="BioGRID-ORCS" id="1404">
    <property type="hits" value="10 hits in 1153 CRISPR screens"/>
</dbReference>
<dbReference type="CD-CODE" id="FB4E32DD">
    <property type="entry name" value="Presynaptic clusters and postsynaptic densities"/>
</dbReference>
<dbReference type="ChiTaRS" id="HAPLN1">
    <property type="organism name" value="human"/>
</dbReference>
<dbReference type="GeneWiki" id="HAPLN1"/>
<dbReference type="GenomeRNAi" id="1404"/>
<dbReference type="Pharos" id="P10915">
    <property type="development level" value="Tbio"/>
</dbReference>
<dbReference type="PRO" id="PR:P10915"/>
<dbReference type="Proteomes" id="UP000005640">
    <property type="component" value="Chromosome 5"/>
</dbReference>
<dbReference type="RNAct" id="P10915">
    <property type="molecule type" value="protein"/>
</dbReference>
<dbReference type="Bgee" id="ENSG00000145681">
    <property type="expression patterns" value="Expressed in tibia and 127 other cell types or tissues"/>
</dbReference>
<dbReference type="ExpressionAtlas" id="P10915">
    <property type="expression patterns" value="baseline and differential"/>
</dbReference>
<dbReference type="GO" id="GO:0062023">
    <property type="term" value="C:collagen-containing extracellular matrix"/>
    <property type="evidence" value="ECO:0007005"/>
    <property type="project" value="BHF-UCL"/>
</dbReference>
<dbReference type="GO" id="GO:0031012">
    <property type="term" value="C:extracellular matrix"/>
    <property type="evidence" value="ECO:0000304"/>
    <property type="project" value="ProtInc"/>
</dbReference>
<dbReference type="GO" id="GO:0005576">
    <property type="term" value="C:extracellular region"/>
    <property type="evidence" value="ECO:0000304"/>
    <property type="project" value="Reactome"/>
</dbReference>
<dbReference type="GO" id="GO:0005615">
    <property type="term" value="C:extracellular space"/>
    <property type="evidence" value="ECO:0000318"/>
    <property type="project" value="GO_Central"/>
</dbReference>
<dbReference type="GO" id="GO:0072534">
    <property type="term" value="C:perineuronal net"/>
    <property type="evidence" value="ECO:0000318"/>
    <property type="project" value="GO_Central"/>
</dbReference>
<dbReference type="GO" id="GO:0045202">
    <property type="term" value="C:synapse"/>
    <property type="evidence" value="ECO:0000318"/>
    <property type="project" value="GO_Central"/>
</dbReference>
<dbReference type="GO" id="GO:0005540">
    <property type="term" value="F:hyaluronic acid binding"/>
    <property type="evidence" value="ECO:0007669"/>
    <property type="project" value="UniProtKB-KW"/>
</dbReference>
<dbReference type="GO" id="GO:0007155">
    <property type="term" value="P:cell adhesion"/>
    <property type="evidence" value="ECO:0007669"/>
    <property type="project" value="InterPro"/>
</dbReference>
<dbReference type="GO" id="GO:0007417">
    <property type="term" value="P:central nervous system development"/>
    <property type="evidence" value="ECO:0000318"/>
    <property type="project" value="GO_Central"/>
</dbReference>
<dbReference type="GO" id="GO:0001501">
    <property type="term" value="P:skeletal system development"/>
    <property type="evidence" value="ECO:0000318"/>
    <property type="project" value="GO_Central"/>
</dbReference>
<dbReference type="CDD" id="cd05877">
    <property type="entry name" value="Ig_LP_like"/>
    <property type="match status" value="1"/>
</dbReference>
<dbReference type="CDD" id="cd03518">
    <property type="entry name" value="Link_domain_HAPLN_module_1"/>
    <property type="match status" value="1"/>
</dbReference>
<dbReference type="CDD" id="cd03519">
    <property type="entry name" value="Link_domain_HAPLN_module_2"/>
    <property type="match status" value="1"/>
</dbReference>
<dbReference type="FunFam" id="2.60.40.10:FF:000631">
    <property type="entry name" value="Hyaluronan and proteoglycan link protein 1"/>
    <property type="match status" value="1"/>
</dbReference>
<dbReference type="FunFam" id="3.10.100.10:FF:000001">
    <property type="entry name" value="Hyaluronan proteoglycan link protein 1"/>
    <property type="match status" value="1"/>
</dbReference>
<dbReference type="FunFam" id="3.10.100.10:FF:000002">
    <property type="entry name" value="Hyaluronan proteoglycan link protein 1"/>
    <property type="match status" value="1"/>
</dbReference>
<dbReference type="Gene3D" id="2.60.40.10">
    <property type="entry name" value="Immunoglobulins"/>
    <property type="match status" value="1"/>
</dbReference>
<dbReference type="Gene3D" id="3.10.100.10">
    <property type="entry name" value="Mannose-Binding Protein A, subunit A"/>
    <property type="match status" value="2"/>
</dbReference>
<dbReference type="InterPro" id="IPR016186">
    <property type="entry name" value="C-type_lectin-like/link_sf"/>
</dbReference>
<dbReference type="InterPro" id="IPR016187">
    <property type="entry name" value="CTDL_fold"/>
</dbReference>
<dbReference type="InterPro" id="IPR050691">
    <property type="entry name" value="Hyaluronan_bind_Proteoglycan"/>
</dbReference>
<dbReference type="InterPro" id="IPR007110">
    <property type="entry name" value="Ig-like_dom"/>
</dbReference>
<dbReference type="InterPro" id="IPR036179">
    <property type="entry name" value="Ig-like_dom_sf"/>
</dbReference>
<dbReference type="InterPro" id="IPR013783">
    <property type="entry name" value="Ig-like_fold"/>
</dbReference>
<dbReference type="InterPro" id="IPR003599">
    <property type="entry name" value="Ig_sub"/>
</dbReference>
<dbReference type="InterPro" id="IPR013106">
    <property type="entry name" value="Ig_V-set"/>
</dbReference>
<dbReference type="InterPro" id="IPR000538">
    <property type="entry name" value="Link_dom"/>
</dbReference>
<dbReference type="PANTHER" id="PTHR22804">
    <property type="entry name" value="AGGRECAN/VERSICAN PROTEOGLYCAN"/>
    <property type="match status" value="1"/>
</dbReference>
<dbReference type="PANTHER" id="PTHR22804:SF10">
    <property type="entry name" value="HYALURONAN AND PROTEOGLYCAN LINK PROTEIN 1"/>
    <property type="match status" value="1"/>
</dbReference>
<dbReference type="Pfam" id="PF07686">
    <property type="entry name" value="V-set"/>
    <property type="match status" value="1"/>
</dbReference>
<dbReference type="Pfam" id="PF00193">
    <property type="entry name" value="Xlink"/>
    <property type="match status" value="2"/>
</dbReference>
<dbReference type="PRINTS" id="PR01265">
    <property type="entry name" value="LINKMODULE"/>
</dbReference>
<dbReference type="SMART" id="SM00409">
    <property type="entry name" value="IG"/>
    <property type="match status" value="1"/>
</dbReference>
<dbReference type="SMART" id="SM00406">
    <property type="entry name" value="IGv"/>
    <property type="match status" value="1"/>
</dbReference>
<dbReference type="SMART" id="SM00445">
    <property type="entry name" value="LINK"/>
    <property type="match status" value="2"/>
</dbReference>
<dbReference type="SUPFAM" id="SSF56436">
    <property type="entry name" value="C-type lectin-like"/>
    <property type="match status" value="2"/>
</dbReference>
<dbReference type="SUPFAM" id="SSF48726">
    <property type="entry name" value="Immunoglobulin"/>
    <property type="match status" value="1"/>
</dbReference>
<dbReference type="PROSITE" id="PS50835">
    <property type="entry name" value="IG_LIKE"/>
    <property type="match status" value="1"/>
</dbReference>
<dbReference type="PROSITE" id="PS01241">
    <property type="entry name" value="LINK_1"/>
    <property type="match status" value="2"/>
</dbReference>
<dbReference type="PROSITE" id="PS50963">
    <property type="entry name" value="LINK_2"/>
    <property type="match status" value="2"/>
</dbReference>
<gene>
    <name type="primary">HAPLN1</name>
    <name type="synonym">CRTL1</name>
</gene>
<protein>
    <recommendedName>
        <fullName>Hyaluronan and proteoglycan link protein 1</fullName>
    </recommendedName>
    <alternativeName>
        <fullName>Cartilage-linking protein 1</fullName>
        <shortName>Cartilage-link protein</shortName>
    </alternativeName>
    <alternativeName>
        <fullName>Proteoglycan link protein</fullName>
    </alternativeName>
</protein>
<evidence type="ECO:0000250" key="1"/>
<evidence type="ECO:0000255" key="2"/>
<evidence type="ECO:0000255" key="3">
    <source>
        <dbReference type="PROSITE-ProRule" id="PRU00323"/>
    </source>
</evidence>
<evidence type="ECO:0000269" key="4">
    <source>
    </source>
</evidence>
<evidence type="ECO:0000269" key="5">
    <source>
    </source>
</evidence>
<evidence type="ECO:0000269" key="6">
    <source>
    </source>
</evidence>
<evidence type="ECO:0000305" key="7"/>
<comment type="function">
    <text>Stabilizes the aggregates of proteoglycan monomers with hyaluronic acid in the extracellular cartilage matrix.</text>
</comment>
<comment type="subcellular location">
    <subcellularLocation>
        <location>Secreted</location>
        <location>Extracellular space</location>
        <location>Extracellular matrix</location>
    </subcellularLocation>
</comment>
<comment type="tissue specificity">
    <text evidence="4 5">Widely expressed. Weakly expressed in the brain.</text>
</comment>
<comment type="similarity">
    <text evidence="7">Belongs to the HAPLN family.</text>
</comment>
<accession>P10915</accession>
<accession>B2R9A9</accession>